<proteinExistence type="inferred from homology"/>
<reference key="1">
    <citation type="submission" date="2006-08" db="EMBL/GenBank/DDBJ databases">
        <title>Complete sequence of Shewanella frigidimarina NCIMB 400.</title>
        <authorList>
            <consortium name="US DOE Joint Genome Institute"/>
            <person name="Copeland A."/>
            <person name="Lucas S."/>
            <person name="Lapidus A."/>
            <person name="Barry K."/>
            <person name="Detter J.C."/>
            <person name="Glavina del Rio T."/>
            <person name="Hammon N."/>
            <person name="Israni S."/>
            <person name="Dalin E."/>
            <person name="Tice H."/>
            <person name="Pitluck S."/>
            <person name="Fredrickson J.K."/>
            <person name="Kolker E."/>
            <person name="McCuel L.A."/>
            <person name="DiChristina T."/>
            <person name="Nealson K.H."/>
            <person name="Newman D."/>
            <person name="Tiedje J.M."/>
            <person name="Zhou J."/>
            <person name="Romine M.F."/>
            <person name="Culley D.E."/>
            <person name="Serres M."/>
            <person name="Chertkov O."/>
            <person name="Brettin T."/>
            <person name="Bruce D."/>
            <person name="Han C."/>
            <person name="Tapia R."/>
            <person name="Gilna P."/>
            <person name="Schmutz J."/>
            <person name="Larimer F."/>
            <person name="Land M."/>
            <person name="Hauser L."/>
            <person name="Kyrpides N."/>
            <person name="Mikhailova N."/>
            <person name="Richardson P."/>
        </authorList>
    </citation>
    <scope>NUCLEOTIDE SEQUENCE [LARGE SCALE GENOMIC DNA]</scope>
    <source>
        <strain>NCIMB 400</strain>
    </source>
</reference>
<feature type="chain" id="PRO_0000333128" description="Na(+)/H(+) antiporter NhaB">
    <location>
        <begin position="1"/>
        <end position="528"/>
    </location>
</feature>
<feature type="transmembrane region" description="Helical" evidence="1">
    <location>
        <begin position="28"/>
        <end position="50"/>
    </location>
</feature>
<feature type="transmembrane region" description="Helical" evidence="1">
    <location>
        <begin position="67"/>
        <end position="87"/>
    </location>
</feature>
<feature type="transmembrane region" description="Helical" evidence="1">
    <location>
        <begin position="98"/>
        <end position="118"/>
    </location>
</feature>
<feature type="transmembrane region" description="Helical" evidence="1">
    <location>
        <begin position="140"/>
        <end position="160"/>
    </location>
</feature>
<feature type="transmembrane region" description="Helical" evidence="1">
    <location>
        <begin position="240"/>
        <end position="260"/>
    </location>
</feature>
<feature type="transmembrane region" description="Helical" evidence="1">
    <location>
        <begin position="305"/>
        <end position="325"/>
    </location>
</feature>
<feature type="transmembrane region" description="Helical" evidence="1">
    <location>
        <begin position="350"/>
        <end position="370"/>
    </location>
</feature>
<feature type="transmembrane region" description="Helical" evidence="1">
    <location>
        <begin position="391"/>
        <end position="411"/>
    </location>
</feature>
<feature type="transmembrane region" description="Helical" evidence="1">
    <location>
        <begin position="449"/>
        <end position="469"/>
    </location>
</feature>
<feature type="transmembrane region" description="Helical" evidence="1">
    <location>
        <begin position="476"/>
        <end position="496"/>
    </location>
</feature>
<protein>
    <recommendedName>
        <fullName evidence="1">Na(+)/H(+) antiporter NhaB</fullName>
    </recommendedName>
    <alternativeName>
        <fullName evidence="1">Sodium/proton antiporter NhaB</fullName>
    </alternativeName>
</protein>
<evidence type="ECO:0000255" key="1">
    <source>
        <dbReference type="HAMAP-Rule" id="MF_01599"/>
    </source>
</evidence>
<sequence>MQATKSQALFVNFLGNSPKWYKYAIMAFLVINPLLFFYVSPFVAGWVLVVEFIFTLAMALKCYPLQPGGLLAIQAVFIGMTSPSQVLHEIEANLEVLLLLVFMVAGIYFMKQLLLFVFTKMITKVRSKIIVSLMFCTASAFLSAFLDALTVIAVIIAVAVGFYSIYHKVASGKSFNDGHDHTSETTEQLNNEELEAFRAFLRNLLMHSGIGTALGGVCTMVGEPQNLIIAAQAHWQFGEFFLRMSPVTMPVLVAGIFTCFLVEKFKVFGYGAQLPGAVHKILTDYANHEDSHRTNQDKMKLVVQALIGVWLIAGLALHLASVGLIGLSVIILATAFNGITDEHSLGKAFEEALPFTALLAVFFAIVGVIIDQELFAPVIQWALGYEGNMQLVIFYIANGLLSMVSDNVFVGTVYINEVKAALMSGQITRDQFDLLAVAINTGTNLPSVATPNGQAAFLFLLTSAIAPLIRLSYGRMVWMALPYTIVLSIVGVMAIESGFLVDMTDVLYETQLIIHHSAKDISGAVMGH</sequence>
<gene>
    <name evidence="1" type="primary">nhaB</name>
    <name type="ordered locus">Sfri_1742</name>
</gene>
<comment type="function">
    <text evidence="1">Na(+)/H(+) antiporter that extrudes sodium in exchange for external protons.</text>
</comment>
<comment type="catalytic activity">
    <reaction evidence="1">
        <text>2 Na(+)(in) + 3 H(+)(out) = 2 Na(+)(out) + 3 H(+)(in)</text>
        <dbReference type="Rhea" id="RHEA:29247"/>
        <dbReference type="ChEBI" id="CHEBI:15378"/>
        <dbReference type="ChEBI" id="CHEBI:29101"/>
    </reaction>
    <physiologicalReaction direction="left-to-right" evidence="1">
        <dbReference type="Rhea" id="RHEA:29248"/>
    </physiologicalReaction>
</comment>
<comment type="subcellular location">
    <subcellularLocation>
        <location evidence="1">Cell inner membrane</location>
        <topology evidence="1">Multi-pass membrane protein</topology>
    </subcellularLocation>
</comment>
<comment type="similarity">
    <text evidence="1">Belongs to the NhaB Na(+)/H(+) (TC 2.A.34) antiporter family.</text>
</comment>
<dbReference type="EMBL" id="CP000447">
    <property type="protein sequence ID" value="ABI71592.1"/>
    <property type="molecule type" value="Genomic_DNA"/>
</dbReference>
<dbReference type="RefSeq" id="WP_011637208.1">
    <property type="nucleotide sequence ID" value="NC_008345.1"/>
</dbReference>
<dbReference type="SMR" id="Q083H3"/>
<dbReference type="STRING" id="318167.Sfri_1742"/>
<dbReference type="KEGG" id="sfr:Sfri_1742"/>
<dbReference type="eggNOG" id="COG3067">
    <property type="taxonomic scope" value="Bacteria"/>
</dbReference>
<dbReference type="HOGENOM" id="CLU_041110_0_0_6"/>
<dbReference type="OrthoDB" id="5288732at2"/>
<dbReference type="Proteomes" id="UP000000684">
    <property type="component" value="Chromosome"/>
</dbReference>
<dbReference type="GO" id="GO:0005886">
    <property type="term" value="C:plasma membrane"/>
    <property type="evidence" value="ECO:0007669"/>
    <property type="project" value="UniProtKB-SubCell"/>
</dbReference>
<dbReference type="GO" id="GO:0015385">
    <property type="term" value="F:sodium:proton antiporter activity"/>
    <property type="evidence" value="ECO:0007669"/>
    <property type="project" value="InterPro"/>
</dbReference>
<dbReference type="HAMAP" id="MF_01599">
    <property type="entry name" value="NhaB"/>
    <property type="match status" value="1"/>
</dbReference>
<dbReference type="InterPro" id="IPR004671">
    <property type="entry name" value="Na+/H+_antiporter_NhaB"/>
</dbReference>
<dbReference type="NCBIfam" id="TIGR00774">
    <property type="entry name" value="NhaB"/>
    <property type="match status" value="1"/>
</dbReference>
<dbReference type="NCBIfam" id="NF007093">
    <property type="entry name" value="PRK09547.1"/>
    <property type="match status" value="1"/>
</dbReference>
<dbReference type="PANTHER" id="PTHR43302:SF1">
    <property type="entry name" value="NA(+)_H(+) ANTIPORTER NHAB"/>
    <property type="match status" value="1"/>
</dbReference>
<dbReference type="PANTHER" id="PTHR43302">
    <property type="entry name" value="TRANSPORTER ARSB-RELATED"/>
    <property type="match status" value="1"/>
</dbReference>
<dbReference type="Pfam" id="PF06450">
    <property type="entry name" value="NhaB"/>
    <property type="match status" value="1"/>
</dbReference>
<organism>
    <name type="scientific">Shewanella frigidimarina (strain NCIMB 400)</name>
    <dbReference type="NCBI Taxonomy" id="318167"/>
    <lineage>
        <taxon>Bacteria</taxon>
        <taxon>Pseudomonadati</taxon>
        <taxon>Pseudomonadota</taxon>
        <taxon>Gammaproteobacteria</taxon>
        <taxon>Alteromonadales</taxon>
        <taxon>Shewanellaceae</taxon>
        <taxon>Shewanella</taxon>
    </lineage>
</organism>
<accession>Q083H3</accession>
<keyword id="KW-0050">Antiport</keyword>
<keyword id="KW-0997">Cell inner membrane</keyword>
<keyword id="KW-1003">Cell membrane</keyword>
<keyword id="KW-0406">Ion transport</keyword>
<keyword id="KW-0472">Membrane</keyword>
<keyword id="KW-1185">Reference proteome</keyword>
<keyword id="KW-0915">Sodium</keyword>
<keyword id="KW-0739">Sodium transport</keyword>
<keyword id="KW-0812">Transmembrane</keyword>
<keyword id="KW-1133">Transmembrane helix</keyword>
<keyword id="KW-0813">Transport</keyword>
<name>NHAB_SHEFN</name>